<accession>P77318</accession>
<accession>P78159</accession>
<dbReference type="EC" id="3.1.6.-"/>
<dbReference type="EMBL" id="U00096">
    <property type="protein sequence ID" value="AAC74571.2"/>
    <property type="molecule type" value="Genomic_DNA"/>
</dbReference>
<dbReference type="EMBL" id="AP009048">
    <property type="protein sequence ID" value="BAA15169.2"/>
    <property type="molecule type" value="Genomic_DNA"/>
</dbReference>
<dbReference type="PIR" id="E64903">
    <property type="entry name" value="E64903"/>
</dbReference>
<dbReference type="RefSeq" id="NP_416015.2">
    <property type="nucleotide sequence ID" value="NC_000913.3"/>
</dbReference>
<dbReference type="RefSeq" id="WP_001295684.1">
    <property type="nucleotide sequence ID" value="NZ_STEB01000052.1"/>
</dbReference>
<dbReference type="SMR" id="P77318"/>
<dbReference type="BioGRID" id="4260850">
    <property type="interactions" value="30"/>
</dbReference>
<dbReference type="DIP" id="DIP-11682N"/>
<dbReference type="FunCoup" id="P77318">
    <property type="interactions" value="126"/>
</dbReference>
<dbReference type="IntAct" id="P77318">
    <property type="interactions" value="1"/>
</dbReference>
<dbReference type="STRING" id="511145.b1498"/>
<dbReference type="jPOST" id="P77318"/>
<dbReference type="PaxDb" id="511145-b1498"/>
<dbReference type="EnsemblBacteria" id="AAC74571">
    <property type="protein sequence ID" value="AAC74571"/>
    <property type="gene ID" value="b1498"/>
</dbReference>
<dbReference type="GeneID" id="945957"/>
<dbReference type="KEGG" id="ecj:JW5243"/>
<dbReference type="KEGG" id="eco:b1498"/>
<dbReference type="KEGG" id="ecoc:C3026_08675"/>
<dbReference type="PATRIC" id="fig|511145.12.peg.1565"/>
<dbReference type="EchoBASE" id="EB3557"/>
<dbReference type="eggNOG" id="COG3119">
    <property type="taxonomic scope" value="Bacteria"/>
</dbReference>
<dbReference type="HOGENOM" id="CLU_006332_10_2_6"/>
<dbReference type="InParanoid" id="P77318"/>
<dbReference type="OMA" id="HVACRCQ"/>
<dbReference type="OrthoDB" id="9803751at2"/>
<dbReference type="PhylomeDB" id="P77318"/>
<dbReference type="BioCyc" id="EcoCyc:G6788-MONOMER"/>
<dbReference type="PRO" id="PR:P77318"/>
<dbReference type="Proteomes" id="UP000000625">
    <property type="component" value="Chromosome"/>
</dbReference>
<dbReference type="GO" id="GO:0030288">
    <property type="term" value="C:outer membrane-bounded periplasmic space"/>
    <property type="evidence" value="ECO:0000314"/>
    <property type="project" value="EcoCyc"/>
</dbReference>
<dbReference type="GO" id="GO:0004065">
    <property type="term" value="F:arylsulfatase activity"/>
    <property type="evidence" value="ECO:0000318"/>
    <property type="project" value="GO_Central"/>
</dbReference>
<dbReference type="GO" id="GO:0046872">
    <property type="term" value="F:metal ion binding"/>
    <property type="evidence" value="ECO:0007669"/>
    <property type="project" value="UniProtKB-KW"/>
</dbReference>
<dbReference type="FunFam" id="3.40.720.10:FF:000024">
    <property type="entry name" value="Sulfatase YdeN"/>
    <property type="match status" value="1"/>
</dbReference>
<dbReference type="Gene3D" id="3.40.720.10">
    <property type="entry name" value="Alkaline Phosphatase, subunit A"/>
    <property type="match status" value="1"/>
</dbReference>
<dbReference type="InterPro" id="IPR017850">
    <property type="entry name" value="Alkaline_phosphatase_core_sf"/>
</dbReference>
<dbReference type="InterPro" id="IPR050738">
    <property type="entry name" value="Sulfatase"/>
</dbReference>
<dbReference type="InterPro" id="IPR024607">
    <property type="entry name" value="Sulfatase_CS"/>
</dbReference>
<dbReference type="InterPro" id="IPR000917">
    <property type="entry name" value="Sulfatase_N"/>
</dbReference>
<dbReference type="PANTHER" id="PTHR42693">
    <property type="entry name" value="ARYLSULFATASE FAMILY MEMBER"/>
    <property type="match status" value="1"/>
</dbReference>
<dbReference type="PANTHER" id="PTHR42693:SF53">
    <property type="entry name" value="ENDO-4-O-SULFATASE"/>
    <property type="match status" value="1"/>
</dbReference>
<dbReference type="Pfam" id="PF00884">
    <property type="entry name" value="Sulfatase"/>
    <property type="match status" value="1"/>
</dbReference>
<dbReference type="SUPFAM" id="SSF53649">
    <property type="entry name" value="Alkaline phosphatase-like"/>
    <property type="match status" value="1"/>
</dbReference>
<dbReference type="PROSITE" id="PS00523">
    <property type="entry name" value="SULFATASE_1"/>
    <property type="match status" value="1"/>
</dbReference>
<dbReference type="PROSITE" id="PS00149">
    <property type="entry name" value="SULFATASE_2"/>
    <property type="match status" value="1"/>
</dbReference>
<sequence>MKSALKKSVVSTSISLILASGMAAFAAHAADDVKLKATKTNVAFSDFTPTEYSTKGKPNIIVLTMDDLGYGQLPFDKGSFDPKTMENREVVDTYKIGIDKAIEAAQKSTPTLLSLMDEGVRFTNGYVAHGVSGPSRAAIMTGRAPARFGVYSNTDAQDGIPLTETFLPELFQNHGYYTAAVGKWHLSKISNVPVPEDKQTRDYHDNFTTFSAEEWQPQNRGFDYFMGFHAAGTAYYNSPSLFKNRERVPAKGYISDQLTDEAIGVVDRAKTLDQPFMLYLAYNAPHLPNDNPAPDQYQKQFNTGSQTADNYYASVYSVDQGVKRILEQLKKNGQYDNTIILFTSDNGAVIDGPLPLNGAQKGYKSQTYPGGTHTPMFMWWKGKLQPGNYDKLISAMDFYPTALDAADISIPKDLKLDGVSLLPWLQDKKQGEPHKNLTWITSYSHWFDEENIPFWDNYHKFVRHQSDDYPHNPNTEDLSQFSYTVRNNDYSLVYTVENNQLGLYKLTDLQQKDNLAAANPQVVKEMQGVVREFIDSSQPPLSEVNQEKFNNIKKALSEAK</sequence>
<proteinExistence type="inferred from homology"/>
<evidence type="ECO:0000250" key="1"/>
<evidence type="ECO:0000250" key="2">
    <source>
        <dbReference type="UniProtKB" id="P15289"/>
    </source>
</evidence>
<evidence type="ECO:0000255" key="3"/>
<evidence type="ECO:0000305" key="4"/>
<feature type="signal peptide" evidence="3">
    <location>
        <begin position="1"/>
        <end position="29"/>
    </location>
</feature>
<feature type="chain" id="PRO_0000033449" description="Uncharacterized sulfatase YdeN">
    <location>
        <begin position="30"/>
        <end position="560"/>
    </location>
</feature>
<feature type="active site" description="Nucleophile" evidence="2">
    <location>
        <position position="132"/>
    </location>
</feature>
<feature type="active site" evidence="2">
    <location>
        <position position="185"/>
    </location>
</feature>
<feature type="binding site" evidence="1">
    <location>
        <position position="66"/>
    </location>
    <ligand>
        <name>Ca(2+)</name>
        <dbReference type="ChEBI" id="CHEBI:29108"/>
    </ligand>
</feature>
<feature type="binding site" evidence="1">
    <location>
        <position position="67"/>
    </location>
    <ligand>
        <name>Ca(2+)</name>
        <dbReference type="ChEBI" id="CHEBI:29108"/>
    </ligand>
</feature>
<feature type="binding site" description="via 3-oxoalanine" evidence="1">
    <location>
        <position position="132"/>
    </location>
    <ligand>
        <name>Ca(2+)</name>
        <dbReference type="ChEBI" id="CHEBI:29108"/>
    </ligand>
</feature>
<feature type="binding site" evidence="1">
    <location>
        <position position="345"/>
    </location>
    <ligand>
        <name>Ca(2+)</name>
        <dbReference type="ChEBI" id="CHEBI:29108"/>
    </ligand>
</feature>
<feature type="binding site" evidence="1">
    <location>
        <position position="346"/>
    </location>
    <ligand>
        <name>Ca(2+)</name>
        <dbReference type="ChEBI" id="CHEBI:29108"/>
    </ligand>
</feature>
<feature type="modified residue" description="3-oxoalanine (Ser)" evidence="2">
    <location>
        <position position="132"/>
    </location>
</feature>
<comment type="cofactor">
    <cofactor evidence="1">
        <name>Ca(2+)</name>
        <dbReference type="ChEBI" id="CHEBI:29108"/>
    </cofactor>
    <text evidence="1">Binds 1 Ca(2+) ion per subunit.</text>
</comment>
<comment type="PTM">
    <text evidence="1">The conversion to 3-oxoalanine (also known as C-formylglycine, FGly), of a serine or cysteine residue in prokaryotes and of a cysteine residue in eukaryotes, is critical for catalytic activity.</text>
</comment>
<comment type="similarity">
    <text evidence="4">Belongs to the sulfatase family.</text>
</comment>
<organism>
    <name type="scientific">Escherichia coli (strain K12)</name>
    <dbReference type="NCBI Taxonomy" id="83333"/>
    <lineage>
        <taxon>Bacteria</taxon>
        <taxon>Pseudomonadati</taxon>
        <taxon>Pseudomonadota</taxon>
        <taxon>Gammaproteobacteria</taxon>
        <taxon>Enterobacterales</taxon>
        <taxon>Enterobacteriaceae</taxon>
        <taxon>Escherichia</taxon>
    </lineage>
</organism>
<keyword id="KW-0106">Calcium</keyword>
<keyword id="KW-0378">Hydrolase</keyword>
<keyword id="KW-0479">Metal-binding</keyword>
<keyword id="KW-1185">Reference proteome</keyword>
<keyword id="KW-0732">Signal</keyword>
<gene>
    <name type="primary">ydeN</name>
    <name type="ordered locus">b1498</name>
    <name type="ordered locus">JW5243</name>
</gene>
<name>YDEN_ECOLI</name>
<reference key="1">
    <citation type="journal article" date="1996" name="DNA Res.">
        <title>A 570-kb DNA sequence of the Escherichia coli K-12 genome corresponding to the 28.0-40.1 min region on the linkage map.</title>
        <authorList>
            <person name="Aiba H."/>
            <person name="Baba T."/>
            <person name="Fujita K."/>
            <person name="Hayashi K."/>
            <person name="Inada T."/>
            <person name="Isono K."/>
            <person name="Itoh T."/>
            <person name="Kasai H."/>
            <person name="Kashimoto K."/>
            <person name="Kimura S."/>
            <person name="Kitakawa M."/>
            <person name="Kitagawa M."/>
            <person name="Makino K."/>
            <person name="Miki T."/>
            <person name="Mizobuchi K."/>
            <person name="Mori H."/>
            <person name="Mori T."/>
            <person name="Motomura K."/>
            <person name="Nakade S."/>
            <person name="Nakamura Y."/>
            <person name="Nashimoto H."/>
            <person name="Nishio Y."/>
            <person name="Oshima T."/>
            <person name="Saito N."/>
            <person name="Sampei G."/>
            <person name="Seki Y."/>
            <person name="Sivasundaram S."/>
            <person name="Tagami H."/>
            <person name="Takeda J."/>
            <person name="Takemoto K."/>
            <person name="Takeuchi Y."/>
            <person name="Wada C."/>
            <person name="Yamamoto Y."/>
            <person name="Horiuchi T."/>
        </authorList>
    </citation>
    <scope>NUCLEOTIDE SEQUENCE [LARGE SCALE GENOMIC DNA]</scope>
    <source>
        <strain>K12 / W3110 / ATCC 27325 / DSM 5911</strain>
    </source>
</reference>
<reference key="2">
    <citation type="journal article" date="1997" name="Science">
        <title>The complete genome sequence of Escherichia coli K-12.</title>
        <authorList>
            <person name="Blattner F.R."/>
            <person name="Plunkett G. III"/>
            <person name="Bloch C.A."/>
            <person name="Perna N.T."/>
            <person name="Burland V."/>
            <person name="Riley M."/>
            <person name="Collado-Vides J."/>
            <person name="Glasner J.D."/>
            <person name="Rode C.K."/>
            <person name="Mayhew G.F."/>
            <person name="Gregor J."/>
            <person name="Davis N.W."/>
            <person name="Kirkpatrick H.A."/>
            <person name="Goeden M.A."/>
            <person name="Rose D.J."/>
            <person name="Mau B."/>
            <person name="Shao Y."/>
        </authorList>
    </citation>
    <scope>NUCLEOTIDE SEQUENCE [LARGE SCALE GENOMIC DNA]</scope>
    <source>
        <strain>K12 / MG1655 / ATCC 47076</strain>
    </source>
</reference>
<reference key="3">
    <citation type="journal article" date="2006" name="Mol. Syst. Biol.">
        <title>Highly accurate genome sequences of Escherichia coli K-12 strains MG1655 and W3110.</title>
        <authorList>
            <person name="Hayashi K."/>
            <person name="Morooka N."/>
            <person name="Yamamoto Y."/>
            <person name="Fujita K."/>
            <person name="Isono K."/>
            <person name="Choi S."/>
            <person name="Ohtsubo E."/>
            <person name="Baba T."/>
            <person name="Wanner B.L."/>
            <person name="Mori H."/>
            <person name="Horiuchi T."/>
        </authorList>
    </citation>
    <scope>NUCLEOTIDE SEQUENCE [LARGE SCALE GENOMIC DNA]</scope>
    <source>
        <strain>K12 / W3110 / ATCC 27325 / DSM 5911</strain>
    </source>
</reference>
<protein>
    <recommendedName>
        <fullName>Uncharacterized sulfatase YdeN</fullName>
        <ecNumber>3.1.6.-</ecNumber>
    </recommendedName>
</protein>